<comment type="function">
    <text evidence="3 4 5">Essential for efficient heme-iron acquisition (HIA) (PubMed:30455201). Binds iron (PubMed:29362230). Strains with a functional PPE37 can utilize low concentrations of hemin very efficiently in broth and on agar plates (PubMed:30455201). During infection, might interfere with the pro-inflammatory cytokine response in infected macrophages (PubMed:21233299).</text>
</comment>
<comment type="function">
    <text evidence="4">In vitro, incubation of the protein in the presence of M.tuberculosis proteases leads to the cleavage of PPE37 into two segments, the N- and C-terminal segments (PubMed:29362230). Transfection of human monocytic THP-1 cell lines with the N-terminal segment leads to the proliferation and differentiation of THP-1 cells into adherent stellate cells with dendritic cell-like morphology (PubMed:29362230). Transfection of THP-1 cells with the C-terminal segment leads to the apoptosis of the cells (PubMed:29362230). Recombinant protein antigens display strong B-cell response in tuberculosis patients and immunized mice (PubMed:29362230).</text>
</comment>
<comment type="subcellular location">
    <subcellularLocation>
        <location evidence="4">Cell membrane</location>
        <topology evidence="1">Multi-pass membrane protein</topology>
    </subcellularLocation>
    <text evidence="4">In vitro, the N- and C-terminal segments transfected into the human monocytic THP-1 cells are localized to the cytoplasm and nucleus of THP-1 cells, respectively.</text>
</comment>
<comment type="induction">
    <text evidence="2 4">Induced under low-iron conditions (PubMed:29362230). Transcriptionally regulated by IdeR (PubMed:16113319).</text>
</comment>
<comment type="domain">
    <text evidence="4">Contains an iron-binding motif in the N-terminal part.</text>
</comment>
<comment type="disruption phenotype">
    <text evidence="5">Deletion of the gene results in a strain severely attenuated in HIA (PubMed:30455201). The ppe37 genes with frameshift mutations are incapable of complementing BCG's HIA defect, indicating that they are non-functional (PubMed:30455201).</text>
</comment>
<comment type="miscellaneous">
    <text evidence="5">Significant genetic variability exists in ppe37 genes across different M.tuberculosis strains, with more than 60% of sequences from completely sequenced M.tuberculosis genomes having mutations that result in altered PPE37 proteins (PubMed:30455201). These altered PPE37 proteins are non-functional in HIA (PubMed:30455201).</text>
</comment>
<comment type="similarity">
    <text evidence="6">Belongs to the mycobacterial PPE family.</text>
</comment>
<name>PPE37_MYCTU</name>
<accession>Q79FH3</accession>
<accession>L0TA95</accession>
<keyword id="KW-1003">Cell membrane</keyword>
<keyword id="KW-0408">Iron</keyword>
<keyword id="KW-0472">Membrane</keyword>
<keyword id="KW-0479">Metal-binding</keyword>
<keyword id="KW-1185">Reference proteome</keyword>
<keyword id="KW-0812">Transmembrane</keyword>
<keyword id="KW-1133">Transmembrane helix</keyword>
<reference key="1">
    <citation type="journal article" date="1998" name="Nature">
        <title>Deciphering the biology of Mycobacterium tuberculosis from the complete genome sequence.</title>
        <authorList>
            <person name="Cole S.T."/>
            <person name="Brosch R."/>
            <person name="Parkhill J."/>
            <person name="Garnier T."/>
            <person name="Churcher C.M."/>
            <person name="Harris D.E."/>
            <person name="Gordon S.V."/>
            <person name="Eiglmeier K."/>
            <person name="Gas S."/>
            <person name="Barry C.E. III"/>
            <person name="Tekaia F."/>
            <person name="Badcock K."/>
            <person name="Basham D."/>
            <person name="Brown D."/>
            <person name="Chillingworth T."/>
            <person name="Connor R."/>
            <person name="Davies R.M."/>
            <person name="Devlin K."/>
            <person name="Feltwell T."/>
            <person name="Gentles S."/>
            <person name="Hamlin N."/>
            <person name="Holroyd S."/>
            <person name="Hornsby T."/>
            <person name="Jagels K."/>
            <person name="Krogh A."/>
            <person name="McLean J."/>
            <person name="Moule S."/>
            <person name="Murphy L.D."/>
            <person name="Oliver S."/>
            <person name="Osborne J."/>
            <person name="Quail M.A."/>
            <person name="Rajandream M.A."/>
            <person name="Rogers J."/>
            <person name="Rutter S."/>
            <person name="Seeger K."/>
            <person name="Skelton S."/>
            <person name="Squares S."/>
            <person name="Squares R."/>
            <person name="Sulston J.E."/>
            <person name="Taylor K."/>
            <person name="Whitehead S."/>
            <person name="Barrell B.G."/>
        </authorList>
    </citation>
    <scope>NUCLEOTIDE SEQUENCE [LARGE SCALE GENOMIC DNA]</scope>
    <source>
        <strain>ATCC 25618 / H37Rv</strain>
    </source>
</reference>
<reference key="2">
    <citation type="journal article" date="2005" name="Infect. Immun.">
        <title>Both Corynebacterium diphtheriae DtxR(E175K) and Mycobacterium tuberculosis IdeR(D177K) are dominant positive repressors of IdeR-regulated genes in M. tuberculosis.</title>
        <authorList>
            <person name="Manabe Y.C."/>
            <person name="Hatem C.L."/>
            <person name="Kesavan A.K."/>
            <person name="Durack J."/>
            <person name="Murphy J.R."/>
        </authorList>
    </citation>
    <scope>INDUCTION</scope>
</reference>
<reference key="3">
    <citation type="journal article" date="2011" name="J. Med. Microbiol.">
        <title>Expression of the Mycobacterium tuberculosis PPE37 protein in Mycobacterium smegmatis induces low tumour necrosis factor alpha and interleukin 6 production in murine macrophages.</title>
        <authorList>
            <person name="Daim S."/>
            <person name="Kawamura I."/>
            <person name="Tsuchiya K."/>
            <person name="Hara H."/>
            <person name="Kurenuma T."/>
            <person name="Shen Y."/>
            <person name="Dewamitta S.R."/>
            <person name="Sakai S."/>
            <person name="Nomura T."/>
            <person name="Qu H."/>
            <person name="Mitsuyama M."/>
        </authorList>
    </citation>
    <scope>FUNCTION</scope>
</reference>
<reference key="4">
    <citation type="journal article" date="2011" name="Mol. Cell. Proteomics">
        <title>Proteogenomic analysis of Mycobacterium tuberculosis by high resolution mass spectrometry.</title>
        <authorList>
            <person name="Kelkar D.S."/>
            <person name="Kumar D."/>
            <person name="Kumar P."/>
            <person name="Balakrishnan L."/>
            <person name="Muthusamy B."/>
            <person name="Yadav A.K."/>
            <person name="Shrivastava P."/>
            <person name="Marimuthu A."/>
            <person name="Anand S."/>
            <person name="Sundaram H."/>
            <person name="Kingsbury R."/>
            <person name="Harsha H.C."/>
            <person name="Nair B."/>
            <person name="Prasad T.S."/>
            <person name="Chauhan D.S."/>
            <person name="Katoch K."/>
            <person name="Katoch V.M."/>
            <person name="Kumar P."/>
            <person name="Chaerkady R."/>
            <person name="Ramachandran S."/>
            <person name="Dash D."/>
            <person name="Pandey A."/>
        </authorList>
    </citation>
    <scope>IDENTIFICATION BY MASS SPECTROMETRY [LARGE SCALE ANALYSIS]</scope>
    <source>
        <strain>ATCC 25618 / H37Rv</strain>
    </source>
</reference>
<reference key="5">
    <citation type="journal article" date="2018" name="MBio">
        <title>Contrasting Function of Structured N-Terminal and Unstructured C-Terminal Segments of Mycobacterium tuberculosis PPE37 Protein.</title>
        <authorList>
            <person name="Ahmad J."/>
            <person name="Farhana A."/>
            <person name="Pancsa R."/>
            <person name="Arora S.K."/>
            <person name="Srinivasan A."/>
            <person name="Tyagi A.K."/>
            <person name="Babu M.M."/>
            <person name="Ehtesham N.Z."/>
            <person name="Hasnain S.E."/>
        </authorList>
    </citation>
    <scope>FUNCTION</scope>
    <scope>SUBCELLULAR LOCATION</scope>
    <scope>INDUCTION</scope>
    <scope>DOMAIN</scope>
</reference>
<reference key="6">
    <citation type="journal article" date="2019" name="Infect. Immun.">
        <title>PPE37 Is Essential for Mycobacterium tuberculosis Heme-Iron Acquisition (HIA), and a Defective PPE37 in Mycobacterium bovis BCG Prevents HIA.</title>
        <authorList>
            <person name="Tullius M.V."/>
            <person name="Nava S."/>
            <person name="Horwitz M.A."/>
        </authorList>
    </citation>
    <scope>FUNCTION</scope>
    <scope>DISRUPTION PHENOTYPE</scope>
    <source>
        <strain>Erdman</strain>
    </source>
</reference>
<evidence type="ECO:0000255" key="1"/>
<evidence type="ECO:0000269" key="2">
    <source>
    </source>
</evidence>
<evidence type="ECO:0000269" key="3">
    <source>
    </source>
</evidence>
<evidence type="ECO:0000269" key="4">
    <source>
    </source>
</evidence>
<evidence type="ECO:0000269" key="5">
    <source>
    </source>
</evidence>
<evidence type="ECO:0000305" key="6"/>
<evidence type="ECO:0000305" key="7">
    <source>
    </source>
</evidence>
<evidence type="ECO:0000312" key="8">
    <source>
        <dbReference type="EMBL" id="CCP44898.1"/>
    </source>
</evidence>
<dbReference type="EMBL" id="AL123456">
    <property type="protein sequence ID" value="CCP44898.1"/>
    <property type="molecule type" value="Genomic_DNA"/>
</dbReference>
<dbReference type="PIR" id="F70513">
    <property type="entry name" value="F70513"/>
</dbReference>
<dbReference type="RefSeq" id="WP_003411053.1">
    <property type="nucleotide sequence ID" value="NZ_NVQJ01000058.1"/>
</dbReference>
<dbReference type="RefSeq" id="YP_177861.1">
    <property type="nucleotide sequence ID" value="NC_000962.3"/>
</dbReference>
<dbReference type="SMR" id="Q79FH3"/>
<dbReference type="STRING" id="83332.Rv2123"/>
<dbReference type="PaxDb" id="83332-Rv2123"/>
<dbReference type="GeneID" id="888710"/>
<dbReference type="KEGG" id="mtu:Rv2123"/>
<dbReference type="KEGG" id="mtv:RVBD_2123"/>
<dbReference type="TubercuList" id="Rv2123"/>
<dbReference type="eggNOG" id="COG5651">
    <property type="taxonomic scope" value="Bacteria"/>
</dbReference>
<dbReference type="InParanoid" id="Q79FH3"/>
<dbReference type="OrthoDB" id="4753487at2"/>
<dbReference type="Proteomes" id="UP000001584">
    <property type="component" value="Chromosome"/>
</dbReference>
<dbReference type="GO" id="GO:0052572">
    <property type="term" value="P:response to host immune response"/>
    <property type="evidence" value="ECO:0000318"/>
    <property type="project" value="GO_Central"/>
</dbReference>
<dbReference type="GO" id="GO:0075139">
    <property type="term" value="P:response to host iron concentration"/>
    <property type="evidence" value="ECO:0000315"/>
    <property type="project" value="MTBBASE"/>
</dbReference>
<dbReference type="FunFam" id="1.20.1260.20:FF:000001">
    <property type="entry name" value="PPE family protein PPE41"/>
    <property type="match status" value="1"/>
</dbReference>
<dbReference type="Gene3D" id="1.20.1260.20">
    <property type="entry name" value="PPE superfamily"/>
    <property type="match status" value="1"/>
</dbReference>
<dbReference type="InterPro" id="IPR043641">
    <property type="entry name" value="PPE-PPW_C"/>
</dbReference>
<dbReference type="InterPro" id="IPR000030">
    <property type="entry name" value="PPE_dom"/>
</dbReference>
<dbReference type="InterPro" id="IPR038332">
    <property type="entry name" value="PPE_sf"/>
</dbReference>
<dbReference type="PANTHER" id="PTHR46766">
    <property type="entry name" value="GLUTAMINE-RICH PROTEIN 2"/>
    <property type="match status" value="1"/>
</dbReference>
<dbReference type="PANTHER" id="PTHR46766:SF1">
    <property type="entry name" value="GLUTAMINE-RICH PROTEIN 2"/>
    <property type="match status" value="1"/>
</dbReference>
<dbReference type="Pfam" id="PF00823">
    <property type="entry name" value="PPE"/>
    <property type="match status" value="1"/>
</dbReference>
<dbReference type="Pfam" id="PF18878">
    <property type="entry name" value="PPE-PPW"/>
    <property type="match status" value="1"/>
</dbReference>
<dbReference type="SUPFAM" id="SSF140459">
    <property type="entry name" value="PE/PPE dimer-like"/>
    <property type="match status" value="1"/>
</dbReference>
<organism>
    <name type="scientific">Mycobacterium tuberculosis (strain ATCC 25618 / H37Rv)</name>
    <dbReference type="NCBI Taxonomy" id="83332"/>
    <lineage>
        <taxon>Bacteria</taxon>
        <taxon>Bacillati</taxon>
        <taxon>Actinomycetota</taxon>
        <taxon>Actinomycetes</taxon>
        <taxon>Mycobacteriales</taxon>
        <taxon>Mycobacteriaceae</taxon>
        <taxon>Mycobacterium</taxon>
        <taxon>Mycobacterium tuberculosis complex</taxon>
    </lineage>
</organism>
<gene>
    <name evidence="8" type="primary">PPE37</name>
    <name evidence="8" type="ordered locus">Rv2123</name>
</gene>
<sequence>MTFPMWFAVPPEVPSAWLSTGMGPGPLLAAARAWHALAAQYTEIATELASVLAAVQASSWQGPSADRFVVAHQPFRYWLTHAATVATAAAAAHETAAAGYTSALGGMPTLAELAANHAMHGALVTTNFFGVNTIPIALNEADYLRMWIQAATVMSHYQAVAHESVAATPSTPPAPQIVTSAASSAASSSFPDPTKLILQLLKDFLELLRYLAVELLPGPLGDLIAQVLDWFISFVSGPVFTFLAYLVLDPLIYFGPFAPLTSPVLLPAGLTGLAGLGAVSGPAGPMVERVHSDGPSRQSWPAATGVTLVGTNPAALVTTPAPAPTTSAAPTAPSTPGSSAAQGLYAVGGPDGEGFNPIAKTTALAGVTTDAAAPAAKLPGDQAQSSASKATRLRRRLRQHRFEFLADDGRLTMPNTPEMADVAAGNRGLDALGFAGTIPKSAPGSATGLTHLGGGFADVLSQPMLPHTWDGSD</sequence>
<protein>
    <recommendedName>
        <fullName evidence="6">PPE family protein PPE37</fullName>
    </recommendedName>
    <alternativeName>
        <fullName evidence="6">Heme-iron acquisition protein PPE37</fullName>
    </alternativeName>
</protein>
<feature type="chain" id="PRO_0000379114" description="PPE family protein PPE37">
    <location>
        <begin position="1"/>
        <end position="473"/>
    </location>
</feature>
<feature type="transmembrane region" description="Helical" evidence="1">
    <location>
        <begin position="227"/>
        <end position="247"/>
    </location>
</feature>
<feature type="transmembrane region" description="Helical" evidence="1">
    <location>
        <begin position="250"/>
        <end position="270"/>
    </location>
</feature>
<feature type="short sequence motif" description="Iron-binding motif" evidence="7">
    <location>
        <begin position="203"/>
        <end position="206"/>
    </location>
</feature>
<proteinExistence type="evidence at protein level"/>